<feature type="chain" id="PRO_0000057865" description="Gap junction beta-4 protein">
    <location>
        <begin position="1"/>
        <end position="266"/>
    </location>
</feature>
<feature type="intramembrane region" evidence="1">
    <location>
        <begin position="2"/>
        <end position="13"/>
    </location>
</feature>
<feature type="topological domain" description="Cytoplasmic" evidence="7">
    <location>
        <begin position="14"/>
        <end position="20"/>
    </location>
</feature>
<feature type="transmembrane region" description="Helical" evidence="1">
    <location>
        <begin position="21"/>
        <end position="40"/>
    </location>
</feature>
<feature type="topological domain" description="Extracellular" evidence="7">
    <location>
        <begin position="41"/>
        <end position="73"/>
    </location>
</feature>
<feature type="transmembrane region" description="Helical" evidence="1">
    <location>
        <begin position="74"/>
        <end position="94"/>
    </location>
</feature>
<feature type="topological domain" description="Cytoplasmic" evidence="7">
    <location>
        <begin position="95"/>
        <end position="130"/>
    </location>
</feature>
<feature type="transmembrane region" description="Helical" evidence="1">
    <location>
        <begin position="131"/>
        <end position="151"/>
    </location>
</feature>
<feature type="topological domain" description="Extracellular" evidence="7">
    <location>
        <begin position="152"/>
        <end position="184"/>
    </location>
</feature>
<feature type="transmembrane region" description="Helical" evidence="1">
    <location>
        <begin position="185"/>
        <end position="205"/>
    </location>
</feature>
<feature type="topological domain" description="Cytoplasmic" evidence="7">
    <location>
        <begin position="206"/>
        <end position="266"/>
    </location>
</feature>
<feature type="disulfide bond" evidence="1">
    <location>
        <begin position="53"/>
        <end position="175"/>
    </location>
</feature>
<feature type="disulfide bond" evidence="1">
    <location>
        <begin position="60"/>
        <end position="169"/>
    </location>
</feature>
<feature type="disulfide bond" evidence="1">
    <location>
        <begin position="64"/>
        <end position="164"/>
    </location>
</feature>
<feature type="sequence variant" id="VAR_079194" description="In EKVP2; dbSNP:rs80358211." evidence="5 6">
    <original>G</original>
    <variation>D</variation>
    <location>
        <position position="12"/>
    </location>
</feature>
<feature type="sequence variant" id="VAR_079195" description="In EKVP2; dbSNP:rs80358212." evidence="5">
    <original>R</original>
    <variation>H</variation>
    <location>
        <position position="22"/>
    </location>
</feature>
<feature type="sequence variant" id="VAR_079196" description="In EKVP2; dbSNP:rs80358210." evidence="5">
    <original>T</original>
    <variation>P</variation>
    <location>
        <position position="85"/>
    </location>
</feature>
<feature type="sequence variant" id="VAR_015088" description="In dbSNP:rs9426009." evidence="4">
    <original>R</original>
    <variation>C</variation>
    <location>
        <position position="103"/>
    </location>
</feature>
<feature type="sequence variant" id="VAR_015089" description="In dbSNP:rs140996335." evidence="4 5">
    <original>R</original>
    <variation>Q</variation>
    <location>
        <position position="124"/>
    </location>
</feature>
<feature type="sequence variant" id="VAR_010206" description="In EKVP2; dbSNP:rs80358206." evidence="3 5">
    <original>F</original>
    <variation>L</variation>
    <location>
        <position position="137"/>
    </location>
</feature>
<feature type="sequence variant" id="VAR_015090" description="In dbSNP:rs148710003." evidence="4">
    <original>R</original>
    <variation>C</variation>
    <location>
        <position position="160"/>
    </location>
</feature>
<feature type="sequence variant" id="VAR_015091" description="In dbSNP:rs79193415." evidence="4 5">
    <original>C</original>
    <variation>W</variation>
    <location>
        <position position="169"/>
    </location>
</feature>
<feature type="sequence variant" id="VAR_079197" description="In EKVP2; dbSNP:rs80358213." evidence="5">
    <original>F</original>
    <variation>Y</variation>
    <location>
        <position position="189"/>
    </location>
</feature>
<feature type="sequence variant" id="VAR_015092" description="In dbSNP:rs3738346." evidence="4 5">
    <original>E</original>
    <variation>A</variation>
    <location>
        <position position="204"/>
    </location>
</feature>
<name>CXB4_HUMAN</name>
<protein>
    <recommendedName>
        <fullName>Gap junction beta-4 protein</fullName>
    </recommendedName>
    <alternativeName>
        <fullName>Connexin-30.3</fullName>
        <shortName>Cx30.3</shortName>
    </alternativeName>
</protein>
<proteinExistence type="evidence at protein level"/>
<comment type="function">
    <text evidence="1 2">Structural component of gap junctions (By similarity). Gap junctions are dodecameric channels that connect the cytoplasm of adjoining cells. They are formed by the docking of two hexameric hemichannels, one from each cell membrane (By similarity). Small molecules and ions diffuse from one cell to a neighboring cell via the central pore (By similarity).</text>
</comment>
<comment type="subunit">
    <text evidence="1 2">A hemichannel or connexon is composed of a hexamer of connexins. A functional gap junction is formed by the apposition of two hemichannels (By similarity). Forms heteromeric channels with GJB2 (By similarity).</text>
</comment>
<comment type="interaction">
    <interactant intactId="EBI-12831526">
        <id>Q9NTQ9</id>
    </interactant>
    <interactant intactId="EBI-12003442">
        <id>Q8WVX3-2</id>
        <label>C4orf3</label>
    </interactant>
    <organismsDiffer>false</organismsDiffer>
    <experiments>3</experiments>
</comment>
<comment type="interaction">
    <interactant intactId="EBI-12831526">
        <id>Q9NTQ9</id>
    </interactant>
    <interactant intactId="EBI-372265">
        <id>P21964</id>
        <label>COMT</label>
    </interactant>
    <organismsDiffer>false</organismsDiffer>
    <experiments>3</experiments>
</comment>
<comment type="interaction">
    <interactant intactId="EBI-12831526">
        <id>Q9NTQ9</id>
    </interactant>
    <interactant intactId="EBI-9018187">
        <id>P26715</id>
        <label>KLRC1</label>
    </interactant>
    <organismsDiffer>false</organismsDiffer>
    <experiments>3</experiments>
</comment>
<comment type="interaction">
    <interactant intactId="EBI-12831526">
        <id>Q9NTQ9</id>
    </interactant>
    <interactant intactId="EBI-2820517">
        <id>Q8TAF8</id>
        <label>LHFPL5</label>
    </interactant>
    <organismsDiffer>false</organismsDiffer>
    <experiments>3</experiments>
</comment>
<comment type="interaction">
    <interactant intactId="EBI-12831526">
        <id>Q9NTQ9</id>
    </interactant>
    <interactant intactId="EBI-8650934">
        <id>P48230</id>
        <label>TM4SF4</label>
    </interactant>
    <organismsDiffer>false</organismsDiffer>
    <experiments>3</experiments>
</comment>
<comment type="interaction">
    <interactant intactId="EBI-12831526">
        <id>Q9NTQ9</id>
    </interactant>
    <interactant intactId="EBI-1045825">
        <id>P55061</id>
        <label>TMBIM6</label>
    </interactant>
    <organismsDiffer>false</organismsDiffer>
    <experiments>3</experiments>
</comment>
<comment type="interaction">
    <interactant intactId="EBI-12831526">
        <id>Q9NTQ9</id>
    </interactant>
    <interactant intactId="EBI-723946">
        <id>P17152</id>
        <label>TMEM11</label>
    </interactant>
    <organismsDiffer>false</organismsDiffer>
    <experiments>3</experiments>
</comment>
<comment type="interaction">
    <interactant intactId="EBI-12831526">
        <id>Q9NTQ9</id>
    </interactant>
    <interactant intactId="EBI-10173151">
        <id>A2RU14</id>
        <label>TMEM218</label>
    </interactant>
    <organismsDiffer>false</organismsDiffer>
    <experiments>3</experiments>
</comment>
<comment type="interaction">
    <interactant intactId="EBI-12831526">
        <id>Q9NTQ9</id>
    </interactant>
    <interactant intactId="EBI-12015604">
        <id>Q8N2M4</id>
        <label>TMEM86A</label>
    </interactant>
    <organismsDiffer>false</organismsDiffer>
    <experiments>3</experiments>
</comment>
<comment type="subcellular location">
    <subcellularLocation>
        <location evidence="2">Cell membrane</location>
        <topology evidence="2">Multi-pass membrane protein</topology>
    </subcellularLocation>
    <subcellularLocation>
        <location evidence="2">Cell junction</location>
        <location evidence="2">Gap junction</location>
    </subcellularLocation>
    <text evidence="2">Colocalizes with GJB2 at gap junction plaques in the cochlea.</text>
</comment>
<comment type="disease" evidence="3 5 6">
    <disease id="DI-05018">
        <name>Erythrokeratodermia variabilis et progressiva 2</name>
        <acronym>EKVP2</acronym>
        <description>A form of erythrokeratodermia variabilis et progressiva, a genodermatosis characterized by the coexistence of two independent skin lesions: transient erythema and hyperkeratosis that is usually localized but occasionally occurs in its generalized form. Clinical presentation varies significantly within a family and from one family to another. Palmoplantar keratoderma is present in around 50% of cases.</description>
        <dbReference type="MIM" id="617524"/>
    </disease>
    <text>The disease is caused by variants affecting the gene represented in this entry.</text>
</comment>
<comment type="similarity">
    <text evidence="7">Belongs to the connexin family. Beta-type (group I) subfamily.</text>
</comment>
<accession>Q9NTQ9</accession>
<accession>B3KQ82</accession>
<organism>
    <name type="scientific">Homo sapiens</name>
    <name type="common">Human</name>
    <dbReference type="NCBI Taxonomy" id="9606"/>
    <lineage>
        <taxon>Eukaryota</taxon>
        <taxon>Metazoa</taxon>
        <taxon>Chordata</taxon>
        <taxon>Craniata</taxon>
        <taxon>Vertebrata</taxon>
        <taxon>Euteleostomi</taxon>
        <taxon>Mammalia</taxon>
        <taxon>Eutheria</taxon>
        <taxon>Euarchontoglires</taxon>
        <taxon>Primates</taxon>
        <taxon>Haplorrhini</taxon>
        <taxon>Catarrhini</taxon>
        <taxon>Hominidae</taxon>
        <taxon>Homo</taxon>
    </lineage>
</organism>
<keyword id="KW-0965">Cell junction</keyword>
<keyword id="KW-1003">Cell membrane</keyword>
<keyword id="KW-0225">Disease variant</keyword>
<keyword id="KW-1015">Disulfide bond</keyword>
<keyword id="KW-0303">Gap junction</keyword>
<keyword id="KW-0472">Membrane</keyword>
<keyword id="KW-1007">Palmoplantar keratoderma</keyword>
<keyword id="KW-1267">Proteomics identification</keyword>
<keyword id="KW-1185">Reference proteome</keyword>
<keyword id="KW-0812">Transmembrane</keyword>
<keyword id="KW-1133">Transmembrane helix</keyword>
<reference key="1">
    <citation type="journal article" date="2004" name="Nat. Genet.">
        <title>Complete sequencing and characterization of 21,243 full-length human cDNAs.</title>
        <authorList>
            <person name="Ota T."/>
            <person name="Suzuki Y."/>
            <person name="Nishikawa T."/>
            <person name="Otsuki T."/>
            <person name="Sugiyama T."/>
            <person name="Irie R."/>
            <person name="Wakamatsu A."/>
            <person name="Hayashi K."/>
            <person name="Sato H."/>
            <person name="Nagai K."/>
            <person name="Kimura K."/>
            <person name="Makita H."/>
            <person name="Sekine M."/>
            <person name="Obayashi M."/>
            <person name="Nishi T."/>
            <person name="Shibahara T."/>
            <person name="Tanaka T."/>
            <person name="Ishii S."/>
            <person name="Yamamoto J."/>
            <person name="Saito K."/>
            <person name="Kawai Y."/>
            <person name="Isono Y."/>
            <person name="Nakamura Y."/>
            <person name="Nagahari K."/>
            <person name="Murakami K."/>
            <person name="Yasuda T."/>
            <person name="Iwayanagi T."/>
            <person name="Wagatsuma M."/>
            <person name="Shiratori A."/>
            <person name="Sudo H."/>
            <person name="Hosoiri T."/>
            <person name="Kaku Y."/>
            <person name="Kodaira H."/>
            <person name="Kondo H."/>
            <person name="Sugawara M."/>
            <person name="Takahashi M."/>
            <person name="Kanda K."/>
            <person name="Yokoi T."/>
            <person name="Furuya T."/>
            <person name="Kikkawa E."/>
            <person name="Omura Y."/>
            <person name="Abe K."/>
            <person name="Kamihara K."/>
            <person name="Katsuta N."/>
            <person name="Sato K."/>
            <person name="Tanikawa M."/>
            <person name="Yamazaki M."/>
            <person name="Ninomiya K."/>
            <person name="Ishibashi T."/>
            <person name="Yamashita H."/>
            <person name="Murakawa K."/>
            <person name="Fujimori K."/>
            <person name="Tanai H."/>
            <person name="Kimata M."/>
            <person name="Watanabe M."/>
            <person name="Hiraoka S."/>
            <person name="Chiba Y."/>
            <person name="Ishida S."/>
            <person name="Ono Y."/>
            <person name="Takiguchi S."/>
            <person name="Watanabe S."/>
            <person name="Yosida M."/>
            <person name="Hotuta T."/>
            <person name="Kusano J."/>
            <person name="Kanehori K."/>
            <person name="Takahashi-Fujii A."/>
            <person name="Hara H."/>
            <person name="Tanase T.-O."/>
            <person name="Nomura Y."/>
            <person name="Togiya S."/>
            <person name="Komai F."/>
            <person name="Hara R."/>
            <person name="Takeuchi K."/>
            <person name="Arita M."/>
            <person name="Imose N."/>
            <person name="Musashino K."/>
            <person name="Yuuki H."/>
            <person name="Oshima A."/>
            <person name="Sasaki N."/>
            <person name="Aotsuka S."/>
            <person name="Yoshikawa Y."/>
            <person name="Matsunawa H."/>
            <person name="Ichihara T."/>
            <person name="Shiohata N."/>
            <person name="Sano S."/>
            <person name="Moriya S."/>
            <person name="Momiyama H."/>
            <person name="Satoh N."/>
            <person name="Takami S."/>
            <person name="Terashima Y."/>
            <person name="Suzuki O."/>
            <person name="Nakagawa S."/>
            <person name="Senoh A."/>
            <person name="Mizoguchi H."/>
            <person name="Goto Y."/>
            <person name="Shimizu F."/>
            <person name="Wakebe H."/>
            <person name="Hishigaki H."/>
            <person name="Watanabe T."/>
            <person name="Sugiyama A."/>
            <person name="Takemoto M."/>
            <person name="Kawakami B."/>
            <person name="Yamazaki M."/>
            <person name="Watanabe K."/>
            <person name="Kumagai A."/>
            <person name="Itakura S."/>
            <person name="Fukuzumi Y."/>
            <person name="Fujimori Y."/>
            <person name="Komiyama M."/>
            <person name="Tashiro H."/>
            <person name="Tanigami A."/>
            <person name="Fujiwara T."/>
            <person name="Ono T."/>
            <person name="Yamada K."/>
            <person name="Fujii Y."/>
            <person name="Ozaki K."/>
            <person name="Hirao M."/>
            <person name="Ohmori Y."/>
            <person name="Kawabata A."/>
            <person name="Hikiji T."/>
            <person name="Kobatake N."/>
            <person name="Inagaki H."/>
            <person name="Ikema Y."/>
            <person name="Okamoto S."/>
            <person name="Okitani R."/>
            <person name="Kawakami T."/>
            <person name="Noguchi S."/>
            <person name="Itoh T."/>
            <person name="Shigeta K."/>
            <person name="Senba T."/>
            <person name="Matsumura K."/>
            <person name="Nakajima Y."/>
            <person name="Mizuno T."/>
            <person name="Morinaga M."/>
            <person name="Sasaki M."/>
            <person name="Togashi T."/>
            <person name="Oyama M."/>
            <person name="Hata H."/>
            <person name="Watanabe M."/>
            <person name="Komatsu T."/>
            <person name="Mizushima-Sugano J."/>
            <person name="Satoh T."/>
            <person name="Shirai Y."/>
            <person name="Takahashi Y."/>
            <person name="Nakagawa K."/>
            <person name="Okumura K."/>
            <person name="Nagase T."/>
            <person name="Nomura N."/>
            <person name="Kikuchi H."/>
            <person name="Masuho Y."/>
            <person name="Yamashita R."/>
            <person name="Nakai K."/>
            <person name="Yada T."/>
            <person name="Nakamura Y."/>
            <person name="Ohara O."/>
            <person name="Isogai T."/>
            <person name="Sugano S."/>
        </authorList>
    </citation>
    <scope>NUCLEOTIDE SEQUENCE [LARGE SCALE MRNA]</scope>
    <source>
        <tissue>Trachea</tissue>
    </source>
</reference>
<reference key="2">
    <citation type="journal article" date="2006" name="Nature">
        <title>The DNA sequence and biological annotation of human chromosome 1.</title>
        <authorList>
            <person name="Gregory S.G."/>
            <person name="Barlow K.F."/>
            <person name="McLay K.E."/>
            <person name="Kaul R."/>
            <person name="Swarbreck D."/>
            <person name="Dunham A."/>
            <person name="Scott C.E."/>
            <person name="Howe K.L."/>
            <person name="Woodfine K."/>
            <person name="Spencer C.C.A."/>
            <person name="Jones M.C."/>
            <person name="Gillson C."/>
            <person name="Searle S."/>
            <person name="Zhou Y."/>
            <person name="Kokocinski F."/>
            <person name="McDonald L."/>
            <person name="Evans R."/>
            <person name="Phillips K."/>
            <person name="Atkinson A."/>
            <person name="Cooper R."/>
            <person name="Jones C."/>
            <person name="Hall R.E."/>
            <person name="Andrews T.D."/>
            <person name="Lloyd C."/>
            <person name="Ainscough R."/>
            <person name="Almeida J.P."/>
            <person name="Ambrose K.D."/>
            <person name="Anderson F."/>
            <person name="Andrew R.W."/>
            <person name="Ashwell R.I.S."/>
            <person name="Aubin K."/>
            <person name="Babbage A.K."/>
            <person name="Bagguley C.L."/>
            <person name="Bailey J."/>
            <person name="Beasley H."/>
            <person name="Bethel G."/>
            <person name="Bird C.P."/>
            <person name="Bray-Allen S."/>
            <person name="Brown J.Y."/>
            <person name="Brown A.J."/>
            <person name="Buckley D."/>
            <person name="Burton J."/>
            <person name="Bye J."/>
            <person name="Carder C."/>
            <person name="Chapman J.C."/>
            <person name="Clark S.Y."/>
            <person name="Clarke G."/>
            <person name="Clee C."/>
            <person name="Cobley V."/>
            <person name="Collier R.E."/>
            <person name="Corby N."/>
            <person name="Coville G.J."/>
            <person name="Davies J."/>
            <person name="Deadman R."/>
            <person name="Dunn M."/>
            <person name="Earthrowl M."/>
            <person name="Ellington A.G."/>
            <person name="Errington H."/>
            <person name="Frankish A."/>
            <person name="Frankland J."/>
            <person name="French L."/>
            <person name="Garner P."/>
            <person name="Garnett J."/>
            <person name="Gay L."/>
            <person name="Ghori M.R.J."/>
            <person name="Gibson R."/>
            <person name="Gilby L.M."/>
            <person name="Gillett W."/>
            <person name="Glithero R.J."/>
            <person name="Grafham D.V."/>
            <person name="Griffiths C."/>
            <person name="Griffiths-Jones S."/>
            <person name="Grocock R."/>
            <person name="Hammond S."/>
            <person name="Harrison E.S.I."/>
            <person name="Hart E."/>
            <person name="Haugen E."/>
            <person name="Heath P.D."/>
            <person name="Holmes S."/>
            <person name="Holt K."/>
            <person name="Howden P.J."/>
            <person name="Hunt A.R."/>
            <person name="Hunt S.E."/>
            <person name="Hunter G."/>
            <person name="Isherwood J."/>
            <person name="James R."/>
            <person name="Johnson C."/>
            <person name="Johnson D."/>
            <person name="Joy A."/>
            <person name="Kay M."/>
            <person name="Kershaw J.K."/>
            <person name="Kibukawa M."/>
            <person name="Kimberley A.M."/>
            <person name="King A."/>
            <person name="Knights A.J."/>
            <person name="Lad H."/>
            <person name="Laird G."/>
            <person name="Lawlor S."/>
            <person name="Leongamornlert D.A."/>
            <person name="Lloyd D.M."/>
            <person name="Loveland J."/>
            <person name="Lovell J."/>
            <person name="Lush M.J."/>
            <person name="Lyne R."/>
            <person name="Martin S."/>
            <person name="Mashreghi-Mohammadi M."/>
            <person name="Matthews L."/>
            <person name="Matthews N.S.W."/>
            <person name="McLaren S."/>
            <person name="Milne S."/>
            <person name="Mistry S."/>
            <person name="Moore M.J.F."/>
            <person name="Nickerson T."/>
            <person name="O'Dell C.N."/>
            <person name="Oliver K."/>
            <person name="Palmeiri A."/>
            <person name="Palmer S.A."/>
            <person name="Parker A."/>
            <person name="Patel D."/>
            <person name="Pearce A.V."/>
            <person name="Peck A.I."/>
            <person name="Pelan S."/>
            <person name="Phelps K."/>
            <person name="Phillimore B.J."/>
            <person name="Plumb R."/>
            <person name="Rajan J."/>
            <person name="Raymond C."/>
            <person name="Rouse G."/>
            <person name="Saenphimmachak C."/>
            <person name="Sehra H.K."/>
            <person name="Sheridan E."/>
            <person name="Shownkeen R."/>
            <person name="Sims S."/>
            <person name="Skuce C.D."/>
            <person name="Smith M."/>
            <person name="Steward C."/>
            <person name="Subramanian S."/>
            <person name="Sycamore N."/>
            <person name="Tracey A."/>
            <person name="Tromans A."/>
            <person name="Van Helmond Z."/>
            <person name="Wall M."/>
            <person name="Wallis J.M."/>
            <person name="White S."/>
            <person name="Whitehead S.L."/>
            <person name="Wilkinson J.E."/>
            <person name="Willey D.L."/>
            <person name="Williams H."/>
            <person name="Wilming L."/>
            <person name="Wray P.W."/>
            <person name="Wu Z."/>
            <person name="Coulson A."/>
            <person name="Vaudin M."/>
            <person name="Sulston J.E."/>
            <person name="Durbin R.M."/>
            <person name="Hubbard T."/>
            <person name="Wooster R."/>
            <person name="Dunham I."/>
            <person name="Carter N.P."/>
            <person name="McVean G."/>
            <person name="Ross M.T."/>
            <person name="Harrow J."/>
            <person name="Olson M.V."/>
            <person name="Beck S."/>
            <person name="Rogers J."/>
            <person name="Bentley D.R."/>
        </authorList>
    </citation>
    <scope>NUCLEOTIDE SEQUENCE [LARGE SCALE GENOMIC DNA]</scope>
</reference>
<reference key="3">
    <citation type="submission" date="2005-09" db="EMBL/GenBank/DDBJ databases">
        <authorList>
            <person name="Mural R.J."/>
            <person name="Istrail S."/>
            <person name="Sutton G.G."/>
            <person name="Florea L."/>
            <person name="Halpern A.L."/>
            <person name="Mobarry C.M."/>
            <person name="Lippert R."/>
            <person name="Walenz B."/>
            <person name="Shatkay H."/>
            <person name="Dew I."/>
            <person name="Miller J.R."/>
            <person name="Flanigan M.J."/>
            <person name="Edwards N.J."/>
            <person name="Bolanos R."/>
            <person name="Fasulo D."/>
            <person name="Halldorsson B.V."/>
            <person name="Hannenhalli S."/>
            <person name="Turner R."/>
            <person name="Yooseph S."/>
            <person name="Lu F."/>
            <person name="Nusskern D.R."/>
            <person name="Shue B.C."/>
            <person name="Zheng X.H."/>
            <person name="Zhong F."/>
            <person name="Delcher A.L."/>
            <person name="Huson D.H."/>
            <person name="Kravitz S.A."/>
            <person name="Mouchard L."/>
            <person name="Reinert K."/>
            <person name="Remington K.A."/>
            <person name="Clark A.G."/>
            <person name="Waterman M.S."/>
            <person name="Eichler E.E."/>
            <person name="Adams M.D."/>
            <person name="Hunkapiller M.W."/>
            <person name="Myers E.W."/>
            <person name="Venter J.C."/>
        </authorList>
    </citation>
    <scope>NUCLEOTIDE SEQUENCE [LARGE SCALE GENOMIC DNA]</scope>
</reference>
<reference key="4">
    <citation type="journal article" date="2004" name="Genome Res.">
        <title>The status, quality, and expansion of the NIH full-length cDNA project: the Mammalian Gene Collection (MGC).</title>
        <authorList>
            <consortium name="The MGC Project Team"/>
        </authorList>
    </citation>
    <scope>NUCLEOTIDE SEQUENCE [LARGE SCALE MRNA]</scope>
    <source>
        <tissue>Skin</tissue>
    </source>
</reference>
<reference key="5">
    <citation type="journal article" date="2000" name="Am. J. Hum. Genet.">
        <title>Mutation in the gene for connexin 30.3 in a family with erythrokeratodermia variabilis.</title>
        <authorList>
            <person name="Macari F."/>
            <person name="Landau M."/>
            <person name="Cousin P."/>
            <person name="Mevorah B."/>
            <person name="Brenner S."/>
            <person name="Panizzon R."/>
            <person name="Schorderet D.F."/>
            <person name="Hohl D."/>
            <person name="Huber M."/>
        </authorList>
    </citation>
    <scope>INVOLVEMENT IN EKVP2</scope>
    <scope>VARIANT EKVP2 LEU-137</scope>
</reference>
<reference key="6">
    <citation type="journal article" date="2002" name="Hum. Mutat.">
        <title>A common frameshift mutation and other variants in GJB4 (connexin 30.3): analysis of hearing impairment families.</title>
        <authorList>
            <person name="Lopez-Bigas N."/>
            <person name="Melchionda S."/>
            <person name="Gasparini P."/>
            <person name="Borragan A."/>
            <person name="Arbones M.L."/>
            <person name="Estivill X."/>
        </authorList>
    </citation>
    <scope>VARIANTS CYS-103; GLN-124; CYS-160; TRP-169 AND ALA-204</scope>
</reference>
<reference key="7">
    <citation type="journal article" date="2003" name="J. Invest. Dermatol.">
        <title>Genetic heterogeneity in erythrokeratodermia variabilis: novel mutations in the connexin gene GJB4 (Cx30.3) and genotype-phenotype correlations.</title>
        <authorList>
            <person name="Richard G."/>
            <person name="Brown N."/>
            <person name="Rouan F."/>
            <person name="Van der Schroeff J.G."/>
            <person name="Bijlsma E."/>
            <person name="Eichenfield L.F."/>
            <person name="Sybert V.P."/>
            <person name="Greer K.E."/>
            <person name="Hogan P."/>
            <person name="Campanelli C."/>
            <person name="Compton J.G."/>
            <person name="Bale S.J."/>
            <person name="DiGiovanna J.J."/>
            <person name="Uitto J."/>
        </authorList>
    </citation>
    <scope>VARIANTS EKVP2 ASP-12; HIS-22; PRO-85; LEU-137 AND TYR-189</scope>
    <scope>VARIANTS GLN-124; TRP-169 AND ALA-204</scope>
</reference>
<reference key="8">
    <citation type="journal article" date="2009" name="Am. J. Med. Genet. A">
        <title>The missense mutation G12D in connexin30.3 can cause both erythrokeratodermia variabilis of Mendes da Costa and progressive symmetric erythrokeratodermia of Gottron.</title>
        <authorList>
            <person name="van Steensel M.A."/>
            <person name="Oranje A.P."/>
            <person name="van der Schroeff J.G."/>
            <person name="Wagner A."/>
            <person name="van Geel M."/>
        </authorList>
    </citation>
    <scope>VARIANT EKVP2 ASP-12</scope>
</reference>
<gene>
    <name type="primary">GJB4</name>
</gene>
<sequence>MNWAFLQGLLSGVNKYSTVLSRIWLSVVFIFRVLVYVVAAEEVWDDEQKDFVCNTKQPGCPNVCYDEFFPVSHVRLWALQLILVTCPSLLVVMHVAYREERERKHHLKHGPNAPSLYDNLSKKRGGLWWTYLLSLIFKAAVDAGFLYIFHRLYKDYDMPRVVACSVEPCPHTVDCYISRPTEKKVFTYFMVTTAAICILLNLSEVFYLVGKRCMEIFGPRHRRPRCRECLPDTCPPYVLSQGGHPEDGNSVLMKAGSAPVDAGGYP</sequence>
<evidence type="ECO:0000250" key="1">
    <source>
        <dbReference type="UniProtKB" id="P29033"/>
    </source>
</evidence>
<evidence type="ECO:0000250" key="2">
    <source>
        <dbReference type="UniProtKB" id="Q02738"/>
    </source>
</evidence>
<evidence type="ECO:0000269" key="3">
    <source>
    </source>
</evidence>
<evidence type="ECO:0000269" key="4">
    <source>
    </source>
</evidence>
<evidence type="ECO:0000269" key="5">
    <source>
    </source>
</evidence>
<evidence type="ECO:0000269" key="6">
    <source>
    </source>
</evidence>
<evidence type="ECO:0000305" key="7"/>
<dbReference type="EMBL" id="AK057628">
    <property type="protein sequence ID" value="BAG51944.1"/>
    <property type="molecule type" value="mRNA"/>
</dbReference>
<dbReference type="EMBL" id="AL121988">
    <property type="status" value="NOT_ANNOTATED_CDS"/>
    <property type="molecule type" value="Genomic_DNA"/>
</dbReference>
<dbReference type="EMBL" id="CH471059">
    <property type="protein sequence ID" value="EAX07443.1"/>
    <property type="molecule type" value="Genomic_DNA"/>
</dbReference>
<dbReference type="EMBL" id="BC034709">
    <property type="protein sequence ID" value="AAH34709.1"/>
    <property type="molecule type" value="mRNA"/>
</dbReference>
<dbReference type="CCDS" id="CCDS383.1"/>
<dbReference type="RefSeq" id="NP_694944.1">
    <property type="nucleotide sequence ID" value="NM_153212.3"/>
</dbReference>
<dbReference type="RefSeq" id="XP_011538981.1">
    <property type="nucleotide sequence ID" value="XM_011540679.3"/>
</dbReference>
<dbReference type="RefSeq" id="XP_054190315.1">
    <property type="nucleotide sequence ID" value="XM_054334340.1"/>
</dbReference>
<dbReference type="SMR" id="Q9NTQ9"/>
<dbReference type="BioGRID" id="126063">
    <property type="interactions" value="10"/>
</dbReference>
<dbReference type="FunCoup" id="Q9NTQ9">
    <property type="interactions" value="12"/>
</dbReference>
<dbReference type="IntAct" id="Q9NTQ9">
    <property type="interactions" value="10"/>
</dbReference>
<dbReference type="STRING" id="9606.ENSP00000345868"/>
<dbReference type="TCDB" id="1.A.24.1.14">
    <property type="family name" value="the gap junction-forming connexin (connexin) family"/>
</dbReference>
<dbReference type="iPTMnet" id="Q9NTQ9"/>
<dbReference type="PhosphoSitePlus" id="Q9NTQ9"/>
<dbReference type="BioMuta" id="GJB4"/>
<dbReference type="DMDM" id="12229761"/>
<dbReference type="jPOST" id="Q9NTQ9"/>
<dbReference type="MassIVE" id="Q9NTQ9"/>
<dbReference type="PaxDb" id="9606-ENSP00000345868"/>
<dbReference type="PeptideAtlas" id="Q9NTQ9"/>
<dbReference type="ProteomicsDB" id="82630"/>
<dbReference type="Antibodypedia" id="17219">
    <property type="antibodies" value="166 antibodies from 25 providers"/>
</dbReference>
<dbReference type="DNASU" id="127534"/>
<dbReference type="Ensembl" id="ENST00000339480.3">
    <property type="protein sequence ID" value="ENSP00000345868.1"/>
    <property type="gene ID" value="ENSG00000189433.7"/>
</dbReference>
<dbReference type="GeneID" id="127534"/>
<dbReference type="KEGG" id="hsa:127534"/>
<dbReference type="MANE-Select" id="ENST00000339480.3">
    <property type="protein sequence ID" value="ENSP00000345868.1"/>
    <property type="RefSeq nucleotide sequence ID" value="NM_153212.3"/>
    <property type="RefSeq protein sequence ID" value="NP_694944.1"/>
</dbReference>
<dbReference type="UCSC" id="uc001bxv.1">
    <property type="organism name" value="human"/>
</dbReference>
<dbReference type="AGR" id="HGNC:4286"/>
<dbReference type="CTD" id="127534"/>
<dbReference type="DisGeNET" id="127534"/>
<dbReference type="GeneCards" id="GJB4"/>
<dbReference type="HGNC" id="HGNC:4286">
    <property type="gene designation" value="GJB4"/>
</dbReference>
<dbReference type="HPA" id="ENSG00000189433">
    <property type="expression patterns" value="Tissue enriched (skin)"/>
</dbReference>
<dbReference type="MalaCards" id="GJB4"/>
<dbReference type="MIM" id="605425">
    <property type="type" value="gene"/>
</dbReference>
<dbReference type="MIM" id="617524">
    <property type="type" value="phenotype"/>
</dbReference>
<dbReference type="neXtProt" id="NX_Q9NTQ9"/>
<dbReference type="OpenTargets" id="ENSG00000189433"/>
<dbReference type="Orphanet" id="317">
    <property type="disease" value="Erythrokeratodermia variabilis"/>
</dbReference>
<dbReference type="PharmGKB" id="PA28697"/>
<dbReference type="VEuPathDB" id="HostDB:ENSG00000189433"/>
<dbReference type="eggNOG" id="ENOG502R3YE">
    <property type="taxonomic scope" value="Eukaryota"/>
</dbReference>
<dbReference type="GeneTree" id="ENSGT01030000234513"/>
<dbReference type="HOGENOM" id="CLU_037388_4_1_1"/>
<dbReference type="InParanoid" id="Q9NTQ9"/>
<dbReference type="OMA" id="QDYDMPR"/>
<dbReference type="OrthoDB" id="9441654at2759"/>
<dbReference type="PAN-GO" id="Q9NTQ9">
    <property type="GO annotations" value="3 GO annotations based on evolutionary models"/>
</dbReference>
<dbReference type="PhylomeDB" id="Q9NTQ9"/>
<dbReference type="TreeFam" id="TF329606"/>
<dbReference type="PathwayCommons" id="Q9NTQ9"/>
<dbReference type="Reactome" id="R-HSA-190861">
    <property type="pathway name" value="Gap junction assembly"/>
</dbReference>
<dbReference type="SignaLink" id="Q9NTQ9"/>
<dbReference type="BioGRID-ORCS" id="127534">
    <property type="hits" value="6 hits in 1142 CRISPR screens"/>
</dbReference>
<dbReference type="GeneWiki" id="GJB4"/>
<dbReference type="GenomeRNAi" id="127534"/>
<dbReference type="Pharos" id="Q9NTQ9">
    <property type="development level" value="Tbio"/>
</dbReference>
<dbReference type="PRO" id="PR:Q9NTQ9"/>
<dbReference type="Proteomes" id="UP000005640">
    <property type="component" value="Chromosome 1"/>
</dbReference>
<dbReference type="RNAct" id="Q9NTQ9">
    <property type="molecule type" value="protein"/>
</dbReference>
<dbReference type="Bgee" id="ENSG00000189433">
    <property type="expression patterns" value="Expressed in skin of abdomen and 48 other cell types or tissues"/>
</dbReference>
<dbReference type="ExpressionAtlas" id="Q9NTQ9">
    <property type="expression patterns" value="baseline and differential"/>
</dbReference>
<dbReference type="GO" id="GO:0030054">
    <property type="term" value="C:cell junction"/>
    <property type="evidence" value="ECO:0000314"/>
    <property type="project" value="HPA"/>
</dbReference>
<dbReference type="GO" id="GO:0005922">
    <property type="term" value="C:connexin complex"/>
    <property type="evidence" value="ECO:0000250"/>
    <property type="project" value="UniProtKB"/>
</dbReference>
<dbReference type="GO" id="GO:0005730">
    <property type="term" value="C:nucleolus"/>
    <property type="evidence" value="ECO:0000314"/>
    <property type="project" value="HPA"/>
</dbReference>
<dbReference type="GO" id="GO:0005654">
    <property type="term" value="C:nucleoplasm"/>
    <property type="evidence" value="ECO:0000314"/>
    <property type="project" value="HPA"/>
</dbReference>
<dbReference type="GO" id="GO:0005886">
    <property type="term" value="C:plasma membrane"/>
    <property type="evidence" value="ECO:0000250"/>
    <property type="project" value="UniProtKB"/>
</dbReference>
<dbReference type="GO" id="GO:0005243">
    <property type="term" value="F:gap junction channel activity"/>
    <property type="evidence" value="ECO:0000250"/>
    <property type="project" value="UniProtKB"/>
</dbReference>
<dbReference type="GO" id="GO:0007267">
    <property type="term" value="P:cell-cell signaling"/>
    <property type="evidence" value="ECO:0000250"/>
    <property type="project" value="UniProtKB"/>
</dbReference>
<dbReference type="GO" id="GO:1990349">
    <property type="term" value="P:gap junction-mediated intercellular transport"/>
    <property type="evidence" value="ECO:0000250"/>
    <property type="project" value="UniProtKB"/>
</dbReference>
<dbReference type="GO" id="GO:0042048">
    <property type="term" value="P:olfactory behavior"/>
    <property type="evidence" value="ECO:0007669"/>
    <property type="project" value="Ensembl"/>
</dbReference>
<dbReference type="GO" id="GO:0007608">
    <property type="term" value="P:sensory perception of smell"/>
    <property type="evidence" value="ECO:0007669"/>
    <property type="project" value="Ensembl"/>
</dbReference>
<dbReference type="FunFam" id="1.20.1440.80:FF:000001">
    <property type="entry name" value="Gap junction alpha-1"/>
    <property type="match status" value="1"/>
</dbReference>
<dbReference type="Gene3D" id="1.20.1440.80">
    <property type="entry name" value="Gap junction channel protein cysteine-rich domain"/>
    <property type="match status" value="1"/>
</dbReference>
<dbReference type="InterPro" id="IPR000500">
    <property type="entry name" value="Connexin"/>
</dbReference>
<dbReference type="InterPro" id="IPR002270">
    <property type="entry name" value="Connexin-30.3"/>
</dbReference>
<dbReference type="InterPro" id="IPR019570">
    <property type="entry name" value="Connexin_CCC"/>
</dbReference>
<dbReference type="InterPro" id="IPR017990">
    <property type="entry name" value="Connexin_CS"/>
</dbReference>
<dbReference type="InterPro" id="IPR013092">
    <property type="entry name" value="Connexin_N"/>
</dbReference>
<dbReference type="InterPro" id="IPR038359">
    <property type="entry name" value="Connexin_N_sf"/>
</dbReference>
<dbReference type="PANTHER" id="PTHR11984">
    <property type="entry name" value="CONNEXIN"/>
    <property type="match status" value="1"/>
</dbReference>
<dbReference type="PANTHER" id="PTHR11984:SF30">
    <property type="entry name" value="GAP JUNCTION BETA-4 PROTEIN"/>
    <property type="match status" value="1"/>
</dbReference>
<dbReference type="Pfam" id="PF00029">
    <property type="entry name" value="Connexin"/>
    <property type="match status" value="1"/>
</dbReference>
<dbReference type="PRINTS" id="PR00206">
    <property type="entry name" value="CONNEXIN"/>
</dbReference>
<dbReference type="PRINTS" id="PR01142">
    <property type="entry name" value="CONNEXINB5"/>
</dbReference>
<dbReference type="SMART" id="SM00037">
    <property type="entry name" value="CNX"/>
    <property type="match status" value="1"/>
</dbReference>
<dbReference type="SMART" id="SM01089">
    <property type="entry name" value="Connexin_CCC"/>
    <property type="match status" value="1"/>
</dbReference>
<dbReference type="PROSITE" id="PS00407">
    <property type="entry name" value="CONNEXINS_1"/>
    <property type="match status" value="1"/>
</dbReference>
<dbReference type="PROSITE" id="PS00408">
    <property type="entry name" value="CONNEXINS_2"/>
    <property type="match status" value="1"/>
</dbReference>